<accession>F9USS6</accession>
<dbReference type="EMBL" id="AL935263">
    <property type="protein sequence ID" value="CCC77657.1"/>
    <property type="molecule type" value="Genomic_DNA"/>
</dbReference>
<dbReference type="RefSeq" id="WP_011100882.1">
    <property type="nucleotide sequence ID" value="NC_004567.2"/>
</dbReference>
<dbReference type="RefSeq" id="YP_004888171.1">
    <property type="nucleotide sequence ID" value="NC_004567.2"/>
</dbReference>
<dbReference type="SMR" id="F9USS6"/>
<dbReference type="STRING" id="220668.lp_0101"/>
<dbReference type="EnsemblBacteria" id="CCC77657">
    <property type="protein sequence ID" value="CCC77657"/>
    <property type="gene ID" value="lp_0101"/>
</dbReference>
<dbReference type="KEGG" id="lpl:lp_0101"/>
<dbReference type="PATRIC" id="fig|220668.9.peg.81"/>
<dbReference type="eggNOG" id="COG0619">
    <property type="taxonomic scope" value="Bacteria"/>
</dbReference>
<dbReference type="HOGENOM" id="CLU_056469_3_0_9"/>
<dbReference type="OrthoDB" id="2236046at2"/>
<dbReference type="Proteomes" id="UP000000432">
    <property type="component" value="Chromosome"/>
</dbReference>
<dbReference type="GO" id="GO:0005886">
    <property type="term" value="C:plasma membrane"/>
    <property type="evidence" value="ECO:0007669"/>
    <property type="project" value="UniProtKB-SubCell"/>
</dbReference>
<dbReference type="GO" id="GO:0015675">
    <property type="term" value="P:nickel cation transport"/>
    <property type="evidence" value="ECO:0007669"/>
    <property type="project" value="UniProtKB-KW"/>
</dbReference>
<dbReference type="CDD" id="cd16914">
    <property type="entry name" value="EcfT"/>
    <property type="match status" value="1"/>
</dbReference>
<dbReference type="InterPro" id="IPR003339">
    <property type="entry name" value="ABC/ECF_trnsptr_transmembrane"/>
</dbReference>
<dbReference type="InterPro" id="IPR051611">
    <property type="entry name" value="ECF_transporter_component"/>
</dbReference>
<dbReference type="PANTHER" id="PTHR34857">
    <property type="entry name" value="SLL0384 PROTEIN"/>
    <property type="match status" value="1"/>
</dbReference>
<dbReference type="PANTHER" id="PTHR34857:SF2">
    <property type="entry name" value="SLL0384 PROTEIN"/>
    <property type="match status" value="1"/>
</dbReference>
<dbReference type="Pfam" id="PF02361">
    <property type="entry name" value="CbiQ"/>
    <property type="match status" value="1"/>
</dbReference>
<dbReference type="PROSITE" id="PS00211">
    <property type="entry name" value="ABC_TRANSPORTER_1"/>
    <property type="match status" value="1"/>
</dbReference>
<reference key="1">
    <citation type="journal article" date="2003" name="Proc. Natl. Acad. Sci. U.S.A.">
        <title>Complete genome sequence of Lactobacillus plantarum WCFS1.</title>
        <authorList>
            <person name="Kleerebezem M."/>
            <person name="Boekhorst J."/>
            <person name="van Kranenburg R."/>
            <person name="Molenaar D."/>
            <person name="Kuipers O.P."/>
            <person name="Leer R."/>
            <person name="Tarchini R."/>
            <person name="Peters S.A."/>
            <person name="Sandbrink H.M."/>
            <person name="Fiers M.W.E.J."/>
            <person name="Stiekema W."/>
            <person name="Klein Lankhorst R.M."/>
            <person name="Bron P.A."/>
            <person name="Hoffer S.M."/>
            <person name="Nierop Groot M.N."/>
            <person name="Kerkhoven R."/>
            <person name="De Vries M."/>
            <person name="Ursing B."/>
            <person name="De Vos W.M."/>
            <person name="Siezen R.J."/>
        </authorList>
    </citation>
    <scope>NUCLEOTIDE SEQUENCE [LARGE SCALE GENOMIC DNA]</scope>
    <source>
        <strain>ATCC BAA-793 / NCIMB 8826 / WCFS1</strain>
    </source>
</reference>
<reference key="2">
    <citation type="journal article" date="2012" name="J. Bacteriol.">
        <title>Complete resequencing and reannotation of the Lactobacillus plantarum WCFS1 genome.</title>
        <authorList>
            <person name="Siezen R.J."/>
            <person name="Francke C."/>
            <person name="Renckens B."/>
            <person name="Boekhorst J."/>
            <person name="Wels M."/>
            <person name="Kleerebezem M."/>
            <person name="van Hijum S.A."/>
        </authorList>
    </citation>
    <scope>NUCLEOTIDE SEQUENCE [LARGE SCALE GENOMIC DNA]</scope>
    <scope>GENOME REANNOTATION</scope>
    <source>
        <strain>ATCC BAA-793 / NCIMB 8826 / WCFS1</strain>
    </source>
</reference>
<reference key="3">
    <citation type="journal article" date="2014" name="Nat. Commun.">
        <title>Lactate racemase is a nickel-dependent enzyme activated by a widespread maturation system.</title>
        <authorList>
            <person name="Desguin B."/>
            <person name="Goffin P."/>
            <person name="Viaene E."/>
            <person name="Kleerebezem M."/>
            <person name="Martin-Diaconescu V."/>
            <person name="Maroney M.J."/>
            <person name="Declercq J.P."/>
            <person name="Soumillion P."/>
            <person name="Hols P."/>
        </authorList>
    </citation>
    <scope>FUNCTION</scope>
    <scope>INDUCTION</scope>
    <scope>DISRUPTION PHENOTYPE</scope>
    <source>
        <strain>ATCC BAA-793 / NCIMB 8826 / WCFS1</strain>
    </source>
</reference>
<sequence length="273" mass="31307">MKPTRPNTDIPAWLQTTTTTPTPAIKAKFWQRNQRHLRQLLSRLAQPAPVTATSHWRVAPQFKLIQLLLLVILIALSNNLILLWSLALLVGCQLLWLPPRQLRRFMGSWLISVGMAMLFVLPSYWLAGPTTLLFFGLKTSLMLANAQYYRLTTPFQDLLAGLKALHCPDLLIMTLAIAITYLRMLGQHLLLTMEALELRTVAPTAHPYRLIGALFGNLYLKSYTYALELYAAMEARGFNGHYVRSTGRRTHWRDYLALSPAIIVWILFIFWRH</sequence>
<feature type="chain" id="PRO_0000441650" description="Nickel permease LarQ">
    <location>
        <begin position="1"/>
        <end position="273"/>
    </location>
</feature>
<feature type="transmembrane region" description="Helical" evidence="1">
    <location>
        <begin position="64"/>
        <end position="84"/>
    </location>
</feature>
<feature type="transmembrane region" description="Helical" evidence="1">
    <location>
        <begin position="117"/>
        <end position="137"/>
    </location>
</feature>
<feature type="transmembrane region" description="Helical" evidence="1">
    <location>
        <begin position="159"/>
        <end position="179"/>
    </location>
</feature>
<feature type="transmembrane region" description="Helical" evidence="1">
    <location>
        <begin position="210"/>
        <end position="230"/>
    </location>
</feature>
<feature type="transmembrane region" description="Helical" evidence="1">
    <location>
        <begin position="251"/>
        <end position="271"/>
    </location>
</feature>
<evidence type="ECO:0000255" key="1"/>
<evidence type="ECO:0000269" key="2">
    <source>
    </source>
</evidence>
<evidence type="ECO:0000303" key="3">
    <source>
    </source>
</evidence>
<evidence type="ECO:0000305" key="4"/>
<evidence type="ECO:0000305" key="5">
    <source>
    </source>
</evidence>
<evidence type="ECO:0000312" key="6">
    <source>
        <dbReference type="EMBL" id="CCC77657.1"/>
    </source>
</evidence>
<organism>
    <name type="scientific">Lactiplantibacillus plantarum (strain ATCC BAA-793 / NCIMB 8826 / WCFS1)</name>
    <name type="common">Lactobacillus plantarum</name>
    <dbReference type="NCBI Taxonomy" id="220668"/>
    <lineage>
        <taxon>Bacteria</taxon>
        <taxon>Bacillati</taxon>
        <taxon>Bacillota</taxon>
        <taxon>Bacilli</taxon>
        <taxon>Lactobacillales</taxon>
        <taxon>Lactobacillaceae</taxon>
        <taxon>Lactiplantibacillus</taxon>
    </lineage>
</organism>
<gene>
    <name evidence="3" type="primary">larQ</name>
    <name evidence="6" type="ordered locus">lp_0101</name>
</gene>
<name>LARQ_LACPL</name>
<comment type="function">
    <text evidence="5">Probable transmembrane component of the energy-coupling factor (ECF) transporter complex LarMNQO involved in nickel import.</text>
</comment>
<comment type="subunit">
    <text evidence="4">May form an energy-coupling factor (ECF) transporter complex composed of an ATP-binding protein (A component, LarO), a transmembrane protein (T component, LarQ) and a fused possible substrate-capture protein (S component, LarMN) of unknown stoichiometry.</text>
</comment>
<comment type="subcellular location">
    <subcellularLocation>
        <location evidence="1">Cell membrane</location>
        <topology evidence="1">Multi-pass membrane protein</topology>
    </subcellularLocation>
</comment>
<comment type="induction">
    <text evidence="2">Induced by L-lactate but not by a racemic mixture of DL-lactate. Makes part of the larR(MN)QO operon.</text>
</comment>
<comment type="disruption phenotype">
    <text evidence="2">Deletion of both larO and larQ leads to a loss of lactate racemase activity. Addition of Ni(2+) (but not Co(2+)) restores lactate racemase activity in this mutant.</text>
</comment>
<comment type="similarity">
    <text evidence="4">Belongs to the CbiQ family.</text>
</comment>
<protein>
    <recommendedName>
        <fullName evidence="3">Nickel permease LarQ</fullName>
    </recommendedName>
    <alternativeName>
        <fullName evidence="4">Energy-coupling factor transporter transmembrane protein LarQ</fullName>
        <shortName evidence="4">ECF transporter T component LarQ</shortName>
    </alternativeName>
</protein>
<proteinExistence type="evidence at transcript level"/>
<keyword id="KW-1003">Cell membrane</keyword>
<keyword id="KW-0406">Ion transport</keyword>
<keyword id="KW-0472">Membrane</keyword>
<keyword id="KW-0533">Nickel</keyword>
<keyword id="KW-0921">Nickel transport</keyword>
<keyword id="KW-1185">Reference proteome</keyword>
<keyword id="KW-0812">Transmembrane</keyword>
<keyword id="KW-1133">Transmembrane helix</keyword>
<keyword id="KW-0813">Transport</keyword>